<sequence length="155" mass="16544">MRAVVQRVSQASVTVGDEVVGAIGQGLLILLGIGVGDSEAEARLLAEKTANLRIFADEEGRFNRSLLDIGGEALVVSQFTLYADTRRGRRPSFSDAAPPEIAAPLVDVFAGELRRLGVAVSTGRFGAMMRVALVNDGPVTILLDSAIFREPRNQH</sequence>
<accession>A5UW19</accession>
<proteinExistence type="inferred from homology"/>
<protein>
    <recommendedName>
        <fullName evidence="1">D-aminoacyl-tRNA deacylase</fullName>
        <shortName evidence="1">DTD</shortName>
        <ecNumber evidence="1">3.1.1.96</ecNumber>
    </recommendedName>
    <alternativeName>
        <fullName evidence="1">Gly-tRNA(Ala) deacylase</fullName>
    </alternativeName>
</protein>
<reference key="1">
    <citation type="submission" date="2007-04" db="EMBL/GenBank/DDBJ databases">
        <title>Complete sequence of Roseiflexus sp. RS-1.</title>
        <authorList>
            <consortium name="US DOE Joint Genome Institute"/>
            <person name="Copeland A."/>
            <person name="Lucas S."/>
            <person name="Lapidus A."/>
            <person name="Barry K."/>
            <person name="Detter J.C."/>
            <person name="Glavina del Rio T."/>
            <person name="Hammon N."/>
            <person name="Israni S."/>
            <person name="Dalin E."/>
            <person name="Tice H."/>
            <person name="Pitluck S."/>
            <person name="Chertkov O."/>
            <person name="Brettin T."/>
            <person name="Bruce D."/>
            <person name="Han C."/>
            <person name="Schmutz J."/>
            <person name="Larimer F."/>
            <person name="Land M."/>
            <person name="Hauser L."/>
            <person name="Kyrpides N."/>
            <person name="Mikhailova N."/>
            <person name="Bryant D.A."/>
            <person name="Richardson P."/>
        </authorList>
    </citation>
    <scope>NUCLEOTIDE SEQUENCE [LARGE SCALE GENOMIC DNA]</scope>
    <source>
        <strain>RS-1</strain>
    </source>
</reference>
<comment type="function">
    <text evidence="1">An aminoacyl-tRNA editing enzyme that deacylates mischarged D-aminoacyl-tRNAs. Also deacylates mischarged glycyl-tRNA(Ala), protecting cells against glycine mischarging by AlaRS. Acts via tRNA-based rather than protein-based catalysis; rejects L-amino acids rather than detecting D-amino acids in the active site. By recycling D-aminoacyl-tRNA to D-amino acids and free tRNA molecules, this enzyme counteracts the toxicity associated with the formation of D-aminoacyl-tRNA entities in vivo and helps enforce protein L-homochirality.</text>
</comment>
<comment type="catalytic activity">
    <reaction evidence="1">
        <text>glycyl-tRNA(Ala) + H2O = tRNA(Ala) + glycine + H(+)</text>
        <dbReference type="Rhea" id="RHEA:53744"/>
        <dbReference type="Rhea" id="RHEA-COMP:9657"/>
        <dbReference type="Rhea" id="RHEA-COMP:13640"/>
        <dbReference type="ChEBI" id="CHEBI:15377"/>
        <dbReference type="ChEBI" id="CHEBI:15378"/>
        <dbReference type="ChEBI" id="CHEBI:57305"/>
        <dbReference type="ChEBI" id="CHEBI:78442"/>
        <dbReference type="ChEBI" id="CHEBI:78522"/>
        <dbReference type="EC" id="3.1.1.96"/>
    </reaction>
</comment>
<comment type="catalytic activity">
    <reaction evidence="1">
        <text>a D-aminoacyl-tRNA + H2O = a tRNA + a D-alpha-amino acid + H(+)</text>
        <dbReference type="Rhea" id="RHEA:13953"/>
        <dbReference type="Rhea" id="RHEA-COMP:10123"/>
        <dbReference type="Rhea" id="RHEA-COMP:10124"/>
        <dbReference type="ChEBI" id="CHEBI:15377"/>
        <dbReference type="ChEBI" id="CHEBI:15378"/>
        <dbReference type="ChEBI" id="CHEBI:59871"/>
        <dbReference type="ChEBI" id="CHEBI:78442"/>
        <dbReference type="ChEBI" id="CHEBI:79333"/>
        <dbReference type="EC" id="3.1.1.96"/>
    </reaction>
</comment>
<comment type="subunit">
    <text evidence="1">Homodimer.</text>
</comment>
<comment type="subcellular location">
    <subcellularLocation>
        <location evidence="1">Cytoplasm</location>
    </subcellularLocation>
</comment>
<comment type="domain">
    <text evidence="1">A Gly-cisPro motif from one monomer fits into the active site of the other monomer to allow specific chiral rejection of L-amino acids.</text>
</comment>
<comment type="similarity">
    <text evidence="1">Belongs to the DTD family.</text>
</comment>
<name>DTD_ROSS1</name>
<organism>
    <name type="scientific">Roseiflexus sp. (strain RS-1)</name>
    <dbReference type="NCBI Taxonomy" id="357808"/>
    <lineage>
        <taxon>Bacteria</taxon>
        <taxon>Bacillati</taxon>
        <taxon>Chloroflexota</taxon>
        <taxon>Chloroflexia</taxon>
        <taxon>Chloroflexales</taxon>
        <taxon>Roseiflexineae</taxon>
        <taxon>Roseiflexaceae</taxon>
        <taxon>Roseiflexus</taxon>
    </lineage>
</organism>
<evidence type="ECO:0000255" key="1">
    <source>
        <dbReference type="HAMAP-Rule" id="MF_00518"/>
    </source>
</evidence>
<dbReference type="EC" id="3.1.1.96" evidence="1"/>
<dbReference type="EMBL" id="CP000686">
    <property type="protein sequence ID" value="ABQ90822.1"/>
    <property type="molecule type" value="Genomic_DNA"/>
</dbReference>
<dbReference type="RefSeq" id="WP_011957166.1">
    <property type="nucleotide sequence ID" value="NC_009523.1"/>
</dbReference>
<dbReference type="SMR" id="A5UW19"/>
<dbReference type="STRING" id="357808.RoseRS_2445"/>
<dbReference type="KEGG" id="rrs:RoseRS_2445"/>
<dbReference type="eggNOG" id="COG1490">
    <property type="taxonomic scope" value="Bacteria"/>
</dbReference>
<dbReference type="HOGENOM" id="CLU_076901_1_0_0"/>
<dbReference type="OrthoDB" id="9801395at2"/>
<dbReference type="Proteomes" id="UP000006554">
    <property type="component" value="Chromosome"/>
</dbReference>
<dbReference type="GO" id="GO:0005737">
    <property type="term" value="C:cytoplasm"/>
    <property type="evidence" value="ECO:0007669"/>
    <property type="project" value="UniProtKB-SubCell"/>
</dbReference>
<dbReference type="GO" id="GO:0051500">
    <property type="term" value="F:D-tyrosyl-tRNA(Tyr) deacylase activity"/>
    <property type="evidence" value="ECO:0007669"/>
    <property type="project" value="TreeGrafter"/>
</dbReference>
<dbReference type="GO" id="GO:0106026">
    <property type="term" value="F:Gly-tRNA(Ala) deacylase activity"/>
    <property type="evidence" value="ECO:0007669"/>
    <property type="project" value="UniProtKB-UniRule"/>
</dbReference>
<dbReference type="GO" id="GO:0043908">
    <property type="term" value="F:Ser(Gly)-tRNA(Ala) hydrolase activity"/>
    <property type="evidence" value="ECO:0007669"/>
    <property type="project" value="UniProtKB-UniRule"/>
</dbReference>
<dbReference type="GO" id="GO:0000049">
    <property type="term" value="F:tRNA binding"/>
    <property type="evidence" value="ECO:0007669"/>
    <property type="project" value="UniProtKB-UniRule"/>
</dbReference>
<dbReference type="GO" id="GO:0019478">
    <property type="term" value="P:D-amino acid catabolic process"/>
    <property type="evidence" value="ECO:0007669"/>
    <property type="project" value="UniProtKB-UniRule"/>
</dbReference>
<dbReference type="CDD" id="cd00563">
    <property type="entry name" value="Dtyr_deacylase"/>
    <property type="match status" value="1"/>
</dbReference>
<dbReference type="FunFam" id="3.50.80.10:FF:000001">
    <property type="entry name" value="D-aminoacyl-tRNA deacylase"/>
    <property type="match status" value="1"/>
</dbReference>
<dbReference type="Gene3D" id="3.50.80.10">
    <property type="entry name" value="D-tyrosyl-tRNA(Tyr) deacylase"/>
    <property type="match status" value="1"/>
</dbReference>
<dbReference type="HAMAP" id="MF_00518">
    <property type="entry name" value="Deacylase_Dtd"/>
    <property type="match status" value="1"/>
</dbReference>
<dbReference type="InterPro" id="IPR003732">
    <property type="entry name" value="Daa-tRNA_deacyls_DTD"/>
</dbReference>
<dbReference type="InterPro" id="IPR023509">
    <property type="entry name" value="DTD-like_sf"/>
</dbReference>
<dbReference type="NCBIfam" id="TIGR00256">
    <property type="entry name" value="D-aminoacyl-tRNA deacylase"/>
    <property type="match status" value="1"/>
</dbReference>
<dbReference type="PANTHER" id="PTHR10472:SF5">
    <property type="entry name" value="D-AMINOACYL-TRNA DEACYLASE 1"/>
    <property type="match status" value="1"/>
</dbReference>
<dbReference type="PANTHER" id="PTHR10472">
    <property type="entry name" value="D-TYROSYL-TRNA TYR DEACYLASE"/>
    <property type="match status" value="1"/>
</dbReference>
<dbReference type="Pfam" id="PF02580">
    <property type="entry name" value="Tyr_Deacylase"/>
    <property type="match status" value="1"/>
</dbReference>
<dbReference type="SUPFAM" id="SSF69500">
    <property type="entry name" value="DTD-like"/>
    <property type="match status" value="1"/>
</dbReference>
<keyword id="KW-0963">Cytoplasm</keyword>
<keyword id="KW-0378">Hydrolase</keyword>
<keyword id="KW-0694">RNA-binding</keyword>
<keyword id="KW-0820">tRNA-binding</keyword>
<gene>
    <name evidence="1" type="primary">dtd</name>
    <name type="ordered locus">RoseRS_2445</name>
</gene>
<feature type="chain" id="PRO_1000050878" description="D-aminoacyl-tRNA deacylase">
    <location>
        <begin position="1"/>
        <end position="155"/>
    </location>
</feature>
<feature type="short sequence motif" description="Gly-cisPro motif, important for rejection of L-amino acids" evidence="1">
    <location>
        <begin position="137"/>
        <end position="138"/>
    </location>
</feature>